<organism>
    <name type="scientific">Mesorhizobium japonicum (strain LMG 29417 / CECT 9101 / MAFF 303099)</name>
    <name type="common">Mesorhizobium loti (strain MAFF 303099)</name>
    <dbReference type="NCBI Taxonomy" id="266835"/>
    <lineage>
        <taxon>Bacteria</taxon>
        <taxon>Pseudomonadati</taxon>
        <taxon>Pseudomonadota</taxon>
        <taxon>Alphaproteobacteria</taxon>
        <taxon>Hyphomicrobiales</taxon>
        <taxon>Phyllobacteriaceae</taxon>
        <taxon>Mesorhizobium</taxon>
    </lineage>
</organism>
<name>DHAA_RHILO</name>
<sequence>MSSKANPPQPVATAPKRSQIPILDSTMSYVEAGASGPTVLFLHGNPTSSHIWRNIIPHVAPFGRCIAPDLIGYGQSGKPDIDYRFFDHVRYLDAFLDALDIRDVLLVAQDWGTALAFHLAARRPQRVLGLAFMEFIRPFERWEDFHQRPQAREMFKALRTPGVGEKLVLEDNVFVEKVLPASVLRAMSDDEMDVYRAPFPTPQSRKPVLRLPREMPIEGQPADVAAISAHDHRALRLSTYPKLLFAGDPGALIGPQAAREFAAGLKNCSFINLGPGAHYLQEDHADAIGRAIASWLPEVVLANQTDELA</sequence>
<gene>
    <name evidence="2" type="primary">dhaA</name>
    <name type="ordered locus">mlr5354</name>
</gene>
<accession>Q98C03</accession>
<proteinExistence type="inferred from homology"/>
<evidence type="ECO:0000255" key="1"/>
<evidence type="ECO:0000255" key="2">
    <source>
        <dbReference type="HAMAP-Rule" id="MF_01231"/>
    </source>
</evidence>
<comment type="function">
    <text evidence="2">Catalyzes hydrolytic cleavage of carbon-halogen bonds in halogenated aliphatic compounds, leading to the formation of the corresponding primary alcohols, halide ions and protons.</text>
</comment>
<comment type="catalytic activity">
    <reaction evidence="2">
        <text>1-haloalkane + H2O = a halide anion + a primary alcohol + H(+)</text>
        <dbReference type="Rhea" id="RHEA:19081"/>
        <dbReference type="ChEBI" id="CHEBI:15377"/>
        <dbReference type="ChEBI" id="CHEBI:15378"/>
        <dbReference type="ChEBI" id="CHEBI:15734"/>
        <dbReference type="ChEBI" id="CHEBI:16042"/>
        <dbReference type="ChEBI" id="CHEBI:18060"/>
        <dbReference type="EC" id="3.8.1.5"/>
    </reaction>
</comment>
<comment type="subunit">
    <text evidence="2">Monomer.</text>
</comment>
<comment type="similarity">
    <text evidence="2">Belongs to the haloalkane dehalogenase family. Type 2 subfamily.</text>
</comment>
<keyword id="KW-0378">Hydrolase</keyword>
<protein>
    <recommendedName>
        <fullName evidence="2">Haloalkane dehalogenase</fullName>
        <ecNumber evidence="2">3.8.1.5</ecNumber>
    </recommendedName>
</protein>
<dbReference type="EC" id="3.8.1.5" evidence="2"/>
<dbReference type="EMBL" id="BA000012">
    <property type="protein sequence ID" value="BAB51818.1"/>
    <property type="molecule type" value="Genomic_DNA"/>
</dbReference>
<dbReference type="RefSeq" id="WP_010913157.1">
    <property type="nucleotide sequence ID" value="NC_002678.2"/>
</dbReference>
<dbReference type="SMR" id="Q98C03"/>
<dbReference type="ESTHER" id="rhilo-dhaa">
    <property type="family name" value="Haloalkane_dehalogenase-HLD2"/>
</dbReference>
<dbReference type="KEGG" id="mlo:mlr5354"/>
<dbReference type="eggNOG" id="COG0596">
    <property type="taxonomic scope" value="Bacteria"/>
</dbReference>
<dbReference type="HOGENOM" id="CLU_020336_13_3_5"/>
<dbReference type="BRENDA" id="3.8.1.5">
    <property type="organism ID" value="3243"/>
</dbReference>
<dbReference type="Proteomes" id="UP000000552">
    <property type="component" value="Chromosome"/>
</dbReference>
<dbReference type="GO" id="GO:0016020">
    <property type="term" value="C:membrane"/>
    <property type="evidence" value="ECO:0007669"/>
    <property type="project" value="TreeGrafter"/>
</dbReference>
<dbReference type="GO" id="GO:0018786">
    <property type="term" value="F:haloalkane dehalogenase activity"/>
    <property type="evidence" value="ECO:0007669"/>
    <property type="project" value="UniProtKB-UniRule"/>
</dbReference>
<dbReference type="Gene3D" id="3.40.50.1820">
    <property type="entry name" value="alpha/beta hydrolase"/>
    <property type="match status" value="1"/>
</dbReference>
<dbReference type="HAMAP" id="MF_01231">
    <property type="entry name" value="Haloalk_dehal_type2"/>
    <property type="match status" value="1"/>
</dbReference>
<dbReference type="InterPro" id="IPR000073">
    <property type="entry name" value="AB_hydrolase_1"/>
</dbReference>
<dbReference type="InterPro" id="IPR029058">
    <property type="entry name" value="AB_hydrolase_fold"/>
</dbReference>
<dbReference type="InterPro" id="IPR050266">
    <property type="entry name" value="AB_hydrolase_sf"/>
</dbReference>
<dbReference type="InterPro" id="IPR000639">
    <property type="entry name" value="Epox_hydrolase-like"/>
</dbReference>
<dbReference type="InterPro" id="IPR023594">
    <property type="entry name" value="Haloalkane_dehalogenase_2"/>
</dbReference>
<dbReference type="NCBIfam" id="NF002938">
    <property type="entry name" value="PRK03592.1"/>
    <property type="match status" value="1"/>
</dbReference>
<dbReference type="PANTHER" id="PTHR43798:SF33">
    <property type="entry name" value="HYDROLASE, PUTATIVE (AFU_ORTHOLOGUE AFUA_2G14860)-RELATED"/>
    <property type="match status" value="1"/>
</dbReference>
<dbReference type="PANTHER" id="PTHR43798">
    <property type="entry name" value="MONOACYLGLYCEROL LIPASE"/>
    <property type="match status" value="1"/>
</dbReference>
<dbReference type="Pfam" id="PF00561">
    <property type="entry name" value="Abhydrolase_1"/>
    <property type="match status" value="1"/>
</dbReference>
<dbReference type="PRINTS" id="PR00412">
    <property type="entry name" value="EPOXHYDRLASE"/>
</dbReference>
<dbReference type="SUPFAM" id="SSF53474">
    <property type="entry name" value="alpha/beta-Hydrolases"/>
    <property type="match status" value="1"/>
</dbReference>
<feature type="chain" id="PRO_0000216784" description="Haloalkane dehalogenase">
    <location>
        <begin position="1"/>
        <end position="309"/>
    </location>
</feature>
<feature type="domain" description="AB hydrolase-1" evidence="1">
    <location>
        <begin position="37"/>
        <end position="148"/>
    </location>
</feature>
<feature type="active site" description="Nucleophile" evidence="2">
    <location>
        <position position="110"/>
    </location>
</feature>
<feature type="active site" description="Proton donor" evidence="2">
    <location>
        <position position="134"/>
    </location>
</feature>
<feature type="active site" description="Proton acceptor" evidence="2">
    <location>
        <position position="278"/>
    </location>
</feature>
<reference key="1">
    <citation type="journal article" date="2000" name="DNA Res.">
        <title>Complete genome structure of the nitrogen-fixing symbiotic bacterium Mesorhizobium loti.</title>
        <authorList>
            <person name="Kaneko T."/>
            <person name="Nakamura Y."/>
            <person name="Sato S."/>
            <person name="Asamizu E."/>
            <person name="Kato T."/>
            <person name="Sasamoto S."/>
            <person name="Watanabe A."/>
            <person name="Idesawa K."/>
            <person name="Ishikawa A."/>
            <person name="Kawashima K."/>
            <person name="Kimura T."/>
            <person name="Kishida Y."/>
            <person name="Kiyokawa C."/>
            <person name="Kohara M."/>
            <person name="Matsumoto M."/>
            <person name="Matsuno A."/>
            <person name="Mochizuki Y."/>
            <person name="Nakayama S."/>
            <person name="Nakazaki N."/>
            <person name="Shimpo S."/>
            <person name="Sugimoto M."/>
            <person name="Takeuchi C."/>
            <person name="Yamada M."/>
            <person name="Tabata S."/>
        </authorList>
    </citation>
    <scope>NUCLEOTIDE SEQUENCE [LARGE SCALE GENOMIC DNA]</scope>
    <source>
        <strain>LMG 29417 / CECT 9101 / MAFF 303099</strain>
    </source>
</reference>